<sequence>MKAKSLTLISITVMFFLFLIYSFNDLFFYSEVKYGDIHEHLDLRMQGIRFSLSHYIIDDKSQLVISEGIYGIGLKMPTGKYYLFPLHSYQSSPDNMARGSLNSLASPLSLYVYEIHNKKNNVVTFFNGDRGFIDVNGETIHLSSLFLGVQGEHIHTSYHDVS</sequence>
<gene>
    <name type="primary">psaF</name>
    <name type="ordered locus">YPTB1333</name>
</gene>
<proteinExistence type="predicted"/>
<feature type="chain" id="PRO_0000097060" description="Protein PsaF">
    <location>
        <begin position="1"/>
        <end position="162"/>
    </location>
</feature>
<reference key="1">
    <citation type="journal article" date="1996" name="Infect. Immun.">
        <title>The psa locus is responsible for thermoinducible binding of Yersinia pseudotuberculosis to cultured cells.</title>
        <authorList>
            <person name="Yang Y."/>
            <person name="Merriam J.J."/>
            <person name="Mueller J.P."/>
            <person name="Isberg R.R."/>
        </authorList>
    </citation>
    <scope>NUCLEOTIDE SEQUENCE [GENOMIC DNA]</scope>
    <source>
        <strain>YPIII / Serotype O:3</strain>
    </source>
</reference>
<reference key="2">
    <citation type="journal article" date="2004" name="Proc. Natl. Acad. Sci. U.S.A.">
        <title>Insights into the evolution of Yersinia pestis through whole-genome comparison with Yersinia pseudotuberculosis.</title>
        <authorList>
            <person name="Chain P.S.G."/>
            <person name="Carniel E."/>
            <person name="Larimer F.W."/>
            <person name="Lamerdin J."/>
            <person name="Stoutland P.O."/>
            <person name="Regala W.M."/>
            <person name="Georgescu A.M."/>
            <person name="Vergez L.M."/>
            <person name="Land M.L."/>
            <person name="Motin V.L."/>
            <person name="Brubaker R.R."/>
            <person name="Fowler J."/>
            <person name="Hinnebusch J."/>
            <person name="Marceau M."/>
            <person name="Medigue C."/>
            <person name="Simonet M."/>
            <person name="Chenal-Francisque V."/>
            <person name="Souza B."/>
            <person name="Dacheux D."/>
            <person name="Elliott J.M."/>
            <person name="Derbise A."/>
            <person name="Hauser L.J."/>
            <person name="Garcia E."/>
        </authorList>
    </citation>
    <scope>NUCLEOTIDE SEQUENCE [LARGE SCALE GENOMIC DNA]</scope>
    <source>
        <strain>IP32953</strain>
    </source>
</reference>
<organism>
    <name type="scientific">Yersinia pseudotuberculosis serotype I (strain IP32953)</name>
    <dbReference type="NCBI Taxonomy" id="273123"/>
    <lineage>
        <taxon>Bacteria</taxon>
        <taxon>Pseudomonadati</taxon>
        <taxon>Pseudomonadota</taxon>
        <taxon>Gammaproteobacteria</taxon>
        <taxon>Enterobacterales</taxon>
        <taxon>Yersiniaceae</taxon>
        <taxon>Yersinia</taxon>
    </lineage>
</organism>
<accession>Q56981</accession>
<accession>Q66CR9</accession>
<evidence type="ECO:0000305" key="1"/>
<dbReference type="EMBL" id="L76301">
    <property type="protein sequence ID" value="AAC37055.1"/>
    <property type="status" value="ALT_FRAME"/>
    <property type="molecule type" value="Genomic_DNA"/>
</dbReference>
<dbReference type="EMBL" id="BX936398">
    <property type="protein sequence ID" value="CAH20573.1"/>
    <property type="molecule type" value="Genomic_DNA"/>
</dbReference>
<dbReference type="RefSeq" id="WP_002216523.1">
    <property type="nucleotide sequence ID" value="NZ_CP009712.1"/>
</dbReference>
<dbReference type="KEGG" id="ypo:BZ17_1188"/>
<dbReference type="KEGG" id="yps:YPTB1333"/>
<dbReference type="PATRIC" id="fig|273123.14.peg.1268"/>
<dbReference type="Proteomes" id="UP000001011">
    <property type="component" value="Chromosome"/>
</dbReference>
<dbReference type="InterPro" id="IPR035182">
    <property type="entry name" value="PsaF"/>
</dbReference>
<dbReference type="Pfam" id="PF17550">
    <property type="entry name" value="PsaF"/>
    <property type="match status" value="1"/>
</dbReference>
<protein>
    <recommendedName>
        <fullName>Protein PsaF</fullName>
    </recommendedName>
</protein>
<comment type="sequence caution" evidence="1">
    <conflict type="frameshift">
        <sequence resource="EMBL-CDS" id="AAC37055"/>
    </conflict>
</comment>
<name>PSAF_YERPS</name>